<sequence length="831" mass="92213">MLTIQFLCPLPNGLHARPAWELKEQCSQWQSEITFINHRQNAKADAKSSLALIGTGTLFNDSCSLNISGSDEEQARRVLEEYIQVRFIDSDSVQPTQAELTAHPLPRSLSRLNPDLLYGNVLASGVGVGTLTLLQSDSLDSYRAIPASAQDSTRLEHSLATLAEQLNQQLRERDGESKTILSAHLSLIQDDEFAGNIRRLMTEQHQGLGAAIIRNMEQVCAKLSASASDYLRERVSDIRDISEQLLHITWPELKPRNNLVLEKPTILVAEDLTPSQFLSLDLKNLAGMILEKTGRTSHTLILARASAIPVLSGLPLDAIARYAGQPAVLDAQCGVLAINPNDAVSGYYQVAQTLADKRQKQQAQAAAQLAYSRDNKRIDIAANIGTALEAPGAFANGAEGVGLFRTEMLYMDRDSEPDEQEQFEAYQQVLLAAGDKPIIFRTMDIGGDKSIPYLNIPQEENPFLGYRAVRIYPEFAGLFRTQLRAILRAASFGNAQLMIPMVHGLDQILWVKGEIQKAIVELKRDGLRHAETITLGIMVEVPSVCYIIDHFCDEVDFFSIGSNDMTQYLYAVDRNNPRVSPLYNPITPSFLRMLQQIVTTAHQRGKWVGICGELGGESRYLPLLLGLGLDELSMSSPRIPAVKSQLRQLDSEACRELARQACECRSAQEIEALLTAFTPEEDVRPLLALENIFVDQAFSNKEQAIQFLCGNLGVNGRTEHPFELEEDVWQREEIVTTGVGFGVAIPHTKSQWIRHSSISIARLAKPVDWQSEMGEVELVIMLTLGANEGMNHVKVFSQLARKLVNKNFRQSLFAAQDAQSILTLLETELTF</sequence>
<keyword id="KW-0963">Cytoplasm</keyword>
<keyword id="KW-0418">Kinase</keyword>
<keyword id="KW-0460">Magnesium</keyword>
<keyword id="KW-0479">Metal-binding</keyword>
<keyword id="KW-0597">Phosphoprotein</keyword>
<keyword id="KW-0598">Phosphotransferase system</keyword>
<keyword id="KW-1185">Reference proteome</keyword>
<keyword id="KW-0762">Sugar transport</keyword>
<keyword id="KW-0808">Transferase</keyword>
<keyword id="KW-0813">Transport</keyword>
<evidence type="ECO:0000250" key="1">
    <source>
        <dbReference type="UniProtKB" id="P08839"/>
    </source>
</evidence>
<evidence type="ECO:0000250" key="2">
    <source>
        <dbReference type="UniProtKB" id="P20966"/>
    </source>
</evidence>
<evidence type="ECO:0000250" key="3">
    <source>
        <dbReference type="UniProtKB" id="P23533"/>
    </source>
</evidence>
<evidence type="ECO:0000250" key="4">
    <source>
        <dbReference type="UniProtKB" id="P77439"/>
    </source>
</evidence>
<evidence type="ECO:0000255" key="5">
    <source>
        <dbReference type="PROSITE-ProRule" id="PRU00417"/>
    </source>
</evidence>
<evidence type="ECO:0000255" key="6">
    <source>
        <dbReference type="PROSITE-ProRule" id="PRU00681"/>
    </source>
</evidence>
<evidence type="ECO:0000305" key="7"/>
<comment type="function">
    <text evidence="4">Multifunctional protein that includes general (non sugar-specific) and sugar-specific components of the phosphoenolpyruvate-dependent sugar phosphotransferase system (sugar PTS). This major carbohydrate active transport system catalyzes the phosphorylation of incoming sugar substrates concomitantly with their translocation across the cell membrane. The enzyme II FryABC PTS system is involved in fructose transport.</text>
</comment>
<comment type="catalytic activity">
    <reaction evidence="1">
        <text>L-histidyl-[protein] + phosphoenolpyruvate = N(pros)-phospho-L-histidyl-[protein] + pyruvate</text>
        <dbReference type="Rhea" id="RHEA:23880"/>
        <dbReference type="Rhea" id="RHEA-COMP:9745"/>
        <dbReference type="Rhea" id="RHEA-COMP:9746"/>
        <dbReference type="ChEBI" id="CHEBI:15361"/>
        <dbReference type="ChEBI" id="CHEBI:29979"/>
        <dbReference type="ChEBI" id="CHEBI:58702"/>
        <dbReference type="ChEBI" id="CHEBI:64837"/>
        <dbReference type="EC" id="2.7.3.9"/>
    </reaction>
</comment>
<comment type="catalytic activity">
    <reaction evidence="2">
        <text>D-fructose(out) + N(pros)-phospho-L-histidyl-[protein] = D-fructose 1-phosphate(in) + L-histidyl-[protein]</text>
        <dbReference type="Rhea" id="RHEA:49252"/>
        <dbReference type="Rhea" id="RHEA-COMP:9745"/>
        <dbReference type="Rhea" id="RHEA-COMP:9746"/>
        <dbReference type="ChEBI" id="CHEBI:29979"/>
        <dbReference type="ChEBI" id="CHEBI:37721"/>
        <dbReference type="ChEBI" id="CHEBI:58674"/>
        <dbReference type="ChEBI" id="CHEBI:64837"/>
        <dbReference type="EC" id="2.7.1.202"/>
    </reaction>
</comment>
<comment type="cofactor">
    <cofactor evidence="1">
        <name>Mg(2+)</name>
        <dbReference type="ChEBI" id="CHEBI:18420"/>
    </cofactor>
</comment>
<comment type="subcellular location">
    <subcellularLocation>
        <location evidence="7">Cytoplasm</location>
    </subcellularLocation>
</comment>
<comment type="domain">
    <text evidence="5">The PTS EIIA type-2 domain is phosphorylated by phospho-HPr on a histidyl residue. Then, it transfers the phosphoryl group to the PTS EIIB type-2 domain.</text>
</comment>
<comment type="domain">
    <text evidence="7">In contrast to classical PTS systems, the fructose-like PTS has no requirement for HPr and Enzyme I; FryA combines a IIA domain with an Enzyme I and a HPr domains.</text>
</comment>
<comment type="similarity">
    <text evidence="7">Belongs to the PEP-utilizing enzyme family.</text>
</comment>
<name>PTFX_ECO57</name>
<proteinExistence type="inferred from homology"/>
<accession>Q8XBQ8</accession>
<dbReference type="EC" id="2.7.3.9" evidence="1"/>
<dbReference type="EC" id="2.7.1.202" evidence="2"/>
<dbReference type="EMBL" id="AE005174">
    <property type="protein sequence ID" value="AAG57509.1"/>
    <property type="molecule type" value="Genomic_DNA"/>
</dbReference>
<dbReference type="EMBL" id="BA000007">
    <property type="protein sequence ID" value="BAB36686.1"/>
    <property type="molecule type" value="Genomic_DNA"/>
</dbReference>
<dbReference type="PIR" id="A85881">
    <property type="entry name" value="A85881"/>
</dbReference>
<dbReference type="PIR" id="G91036">
    <property type="entry name" value="G91036"/>
</dbReference>
<dbReference type="SMR" id="Q8XBQ8"/>
<dbReference type="STRING" id="155864.Z3648"/>
<dbReference type="KEGG" id="ece:Z3648"/>
<dbReference type="KEGG" id="ecs:ECs_3263"/>
<dbReference type="PATRIC" id="fig|386585.9.peg.3407"/>
<dbReference type="eggNOG" id="COG1080">
    <property type="taxonomic scope" value="Bacteria"/>
</dbReference>
<dbReference type="eggNOG" id="COG1762">
    <property type="taxonomic scope" value="Bacteria"/>
</dbReference>
<dbReference type="eggNOG" id="COG1925">
    <property type="taxonomic scope" value="Bacteria"/>
</dbReference>
<dbReference type="HOGENOM" id="CLU_007308_5_1_6"/>
<dbReference type="OMA" id="EMLFMDR"/>
<dbReference type="Proteomes" id="UP000000558">
    <property type="component" value="Chromosome"/>
</dbReference>
<dbReference type="Proteomes" id="UP000002519">
    <property type="component" value="Chromosome"/>
</dbReference>
<dbReference type="GO" id="GO:0005737">
    <property type="term" value="C:cytoplasm"/>
    <property type="evidence" value="ECO:0007669"/>
    <property type="project" value="UniProtKB-SubCell"/>
</dbReference>
<dbReference type="GO" id="GO:0016020">
    <property type="term" value="C:membrane"/>
    <property type="evidence" value="ECO:0007669"/>
    <property type="project" value="InterPro"/>
</dbReference>
<dbReference type="GO" id="GO:0016301">
    <property type="term" value="F:kinase activity"/>
    <property type="evidence" value="ECO:0007669"/>
    <property type="project" value="UniProtKB-KW"/>
</dbReference>
<dbReference type="GO" id="GO:0046872">
    <property type="term" value="F:metal ion binding"/>
    <property type="evidence" value="ECO:0007669"/>
    <property type="project" value="UniProtKB-KW"/>
</dbReference>
<dbReference type="GO" id="GO:0008965">
    <property type="term" value="F:phosphoenolpyruvate-protein phosphotransferase activity"/>
    <property type="evidence" value="ECO:0007669"/>
    <property type="project" value="UniProtKB-EC"/>
</dbReference>
<dbReference type="GO" id="GO:0008982">
    <property type="term" value="F:protein-N(PI)-phosphohistidine-sugar phosphotransferase activity"/>
    <property type="evidence" value="ECO:0007669"/>
    <property type="project" value="InterPro"/>
</dbReference>
<dbReference type="GO" id="GO:0009401">
    <property type="term" value="P:phosphoenolpyruvate-dependent sugar phosphotransferase system"/>
    <property type="evidence" value="ECO:0007669"/>
    <property type="project" value="UniProtKB-KW"/>
</dbReference>
<dbReference type="CDD" id="cd00367">
    <property type="entry name" value="PTS-HPr_like"/>
    <property type="match status" value="1"/>
</dbReference>
<dbReference type="CDD" id="cd00211">
    <property type="entry name" value="PTS_IIA_fru"/>
    <property type="match status" value="1"/>
</dbReference>
<dbReference type="Gene3D" id="3.30.1340.10">
    <property type="entry name" value="HPr-like"/>
    <property type="match status" value="1"/>
</dbReference>
<dbReference type="Gene3D" id="3.40.930.10">
    <property type="entry name" value="Mannitol-specific EII, Chain A"/>
    <property type="match status" value="1"/>
</dbReference>
<dbReference type="Gene3D" id="3.20.20.60">
    <property type="entry name" value="Phosphoenolpyruvate-binding domains"/>
    <property type="match status" value="1"/>
</dbReference>
<dbReference type="Gene3D" id="3.50.30.10">
    <property type="entry name" value="Phosphohistidine domain"/>
    <property type="match status" value="1"/>
</dbReference>
<dbReference type="Gene3D" id="1.10.274.10">
    <property type="entry name" value="PtsI, HPr-binding domain"/>
    <property type="match status" value="1"/>
</dbReference>
<dbReference type="InterPro" id="IPR000032">
    <property type="entry name" value="HPr-like"/>
</dbReference>
<dbReference type="InterPro" id="IPR035895">
    <property type="entry name" value="HPr-like_sf"/>
</dbReference>
<dbReference type="InterPro" id="IPR008279">
    <property type="entry name" value="PEP-util_enz_mobile_dom"/>
</dbReference>
<dbReference type="InterPro" id="IPR050499">
    <property type="entry name" value="PEP-utilizing_PTS_enzyme"/>
</dbReference>
<dbReference type="InterPro" id="IPR000121">
    <property type="entry name" value="PEP_util_C"/>
</dbReference>
<dbReference type="InterPro" id="IPR023151">
    <property type="entry name" value="PEP_util_CS"/>
</dbReference>
<dbReference type="InterPro" id="IPR036637">
    <property type="entry name" value="Phosphohistidine_dom_sf"/>
</dbReference>
<dbReference type="InterPro" id="IPR016152">
    <property type="entry name" value="PTrfase/Anion_transptr"/>
</dbReference>
<dbReference type="InterPro" id="IPR006318">
    <property type="entry name" value="PTS_EI-like"/>
</dbReference>
<dbReference type="InterPro" id="IPR002178">
    <property type="entry name" value="PTS_EIIA_type-2_dom"/>
</dbReference>
<dbReference type="InterPro" id="IPR008731">
    <property type="entry name" value="PTS_EIN"/>
</dbReference>
<dbReference type="InterPro" id="IPR004715">
    <property type="entry name" value="PTS_IIA_fruc"/>
</dbReference>
<dbReference type="InterPro" id="IPR036618">
    <property type="entry name" value="PtsI_HPr-bd_sf"/>
</dbReference>
<dbReference type="InterPro" id="IPR015813">
    <property type="entry name" value="Pyrv/PenolPyrv_kinase-like_dom"/>
</dbReference>
<dbReference type="InterPro" id="IPR040442">
    <property type="entry name" value="Pyrv_kinase-like_dom_sf"/>
</dbReference>
<dbReference type="NCBIfam" id="TIGR00848">
    <property type="entry name" value="fruA"/>
    <property type="match status" value="1"/>
</dbReference>
<dbReference type="NCBIfam" id="TIGR01417">
    <property type="entry name" value="PTS_I_fam"/>
    <property type="match status" value="1"/>
</dbReference>
<dbReference type="PANTHER" id="PTHR46244:SF4">
    <property type="entry name" value="MULTIPHOSPHORYL TRANSFER PROTEIN 1-RELATED"/>
    <property type="match status" value="1"/>
</dbReference>
<dbReference type="PANTHER" id="PTHR46244">
    <property type="entry name" value="PHOSPHOENOLPYRUVATE-PROTEIN PHOSPHOTRANSFERASE"/>
    <property type="match status" value="1"/>
</dbReference>
<dbReference type="Pfam" id="PF05524">
    <property type="entry name" value="PEP-utilisers_N"/>
    <property type="match status" value="1"/>
</dbReference>
<dbReference type="Pfam" id="PF00391">
    <property type="entry name" value="PEP-utilizers"/>
    <property type="match status" value="1"/>
</dbReference>
<dbReference type="Pfam" id="PF02896">
    <property type="entry name" value="PEP-utilizers_C"/>
    <property type="match status" value="1"/>
</dbReference>
<dbReference type="Pfam" id="PF00381">
    <property type="entry name" value="PTS-HPr"/>
    <property type="match status" value="1"/>
</dbReference>
<dbReference type="Pfam" id="PF00359">
    <property type="entry name" value="PTS_EIIA_2"/>
    <property type="match status" value="1"/>
</dbReference>
<dbReference type="PRINTS" id="PR01736">
    <property type="entry name" value="PHPHTRNFRASE"/>
</dbReference>
<dbReference type="SUPFAM" id="SSF47831">
    <property type="entry name" value="Enzyme I of the PEP:sugar phosphotransferase system HPr-binding (sub)domain"/>
    <property type="match status" value="1"/>
</dbReference>
<dbReference type="SUPFAM" id="SSF55594">
    <property type="entry name" value="HPr-like"/>
    <property type="match status" value="1"/>
</dbReference>
<dbReference type="SUPFAM" id="SSF55804">
    <property type="entry name" value="Phoshotransferase/anion transport protein"/>
    <property type="match status" value="1"/>
</dbReference>
<dbReference type="SUPFAM" id="SSF51621">
    <property type="entry name" value="Phosphoenolpyruvate/pyruvate domain"/>
    <property type="match status" value="1"/>
</dbReference>
<dbReference type="SUPFAM" id="SSF52009">
    <property type="entry name" value="Phosphohistidine domain"/>
    <property type="match status" value="1"/>
</dbReference>
<dbReference type="PROSITE" id="PS00742">
    <property type="entry name" value="PEP_ENZYMES_2"/>
    <property type="match status" value="1"/>
</dbReference>
<dbReference type="PROSITE" id="PS51094">
    <property type="entry name" value="PTS_EIIA_TYPE_2"/>
    <property type="match status" value="1"/>
</dbReference>
<dbReference type="PROSITE" id="PS51350">
    <property type="entry name" value="PTS_HPR_DOM"/>
    <property type="match status" value="1"/>
</dbReference>
<protein>
    <recommendedName>
        <fullName evidence="4">Multiphosphoryl transfer protein</fullName>
        <shortName evidence="4">MTP</shortName>
    </recommendedName>
    <alternativeName>
        <fullName evidence="4">Triphosphoryl transfer protein</fullName>
        <shortName evidence="4">TTP</shortName>
    </alternativeName>
    <domain>
        <recommendedName>
            <fullName evidence="4">Phosphoenolpyruvate-protein phosphotransferase</fullName>
            <ecNumber evidence="1">2.7.3.9</ecNumber>
        </recommendedName>
        <alternativeName>
            <fullName evidence="4">Phosphotransferase system enzyme I</fullName>
        </alternativeName>
    </domain>
    <domain>
        <recommendedName>
            <fullName evidence="4">Phosphocarrier protein HPr</fullName>
            <shortName evidence="4">Protein H</shortName>
        </recommendedName>
    </domain>
    <domain>
        <recommendedName>
            <fullName evidence="4">PTS system fructose-like EIIA component</fullName>
            <ecNumber evidence="2">2.7.1.202</ecNumber>
        </recommendedName>
        <alternativeName>
            <fullName evidence="4">Fructose-like phosphotransferase enzyme IIA component</fullName>
        </alternativeName>
    </domain>
</protein>
<gene>
    <name type="primary">fryA</name>
    <name type="ordered locus">Z3648</name>
    <name type="ordered locus">ECs3263</name>
</gene>
<reference key="1">
    <citation type="journal article" date="2001" name="Nature">
        <title>Genome sequence of enterohaemorrhagic Escherichia coli O157:H7.</title>
        <authorList>
            <person name="Perna N.T."/>
            <person name="Plunkett G. III"/>
            <person name="Burland V."/>
            <person name="Mau B."/>
            <person name="Glasner J.D."/>
            <person name="Rose D.J."/>
            <person name="Mayhew G.F."/>
            <person name="Evans P.S."/>
            <person name="Gregor J."/>
            <person name="Kirkpatrick H.A."/>
            <person name="Posfai G."/>
            <person name="Hackett J."/>
            <person name="Klink S."/>
            <person name="Boutin A."/>
            <person name="Shao Y."/>
            <person name="Miller L."/>
            <person name="Grotbeck E.J."/>
            <person name="Davis N.W."/>
            <person name="Lim A."/>
            <person name="Dimalanta E.T."/>
            <person name="Potamousis K."/>
            <person name="Apodaca J."/>
            <person name="Anantharaman T.S."/>
            <person name="Lin J."/>
            <person name="Yen G."/>
            <person name="Schwartz D.C."/>
            <person name="Welch R.A."/>
            <person name="Blattner F.R."/>
        </authorList>
    </citation>
    <scope>NUCLEOTIDE SEQUENCE [LARGE SCALE GENOMIC DNA]</scope>
    <source>
        <strain>O157:H7 / EDL933 / ATCC 700927 / EHEC</strain>
    </source>
</reference>
<reference key="2">
    <citation type="journal article" date="2001" name="DNA Res.">
        <title>Complete genome sequence of enterohemorrhagic Escherichia coli O157:H7 and genomic comparison with a laboratory strain K-12.</title>
        <authorList>
            <person name="Hayashi T."/>
            <person name="Makino K."/>
            <person name="Ohnishi M."/>
            <person name="Kurokawa K."/>
            <person name="Ishii K."/>
            <person name="Yokoyama K."/>
            <person name="Han C.-G."/>
            <person name="Ohtsubo E."/>
            <person name="Nakayama K."/>
            <person name="Murata T."/>
            <person name="Tanaka M."/>
            <person name="Tobe T."/>
            <person name="Iida T."/>
            <person name="Takami H."/>
            <person name="Honda T."/>
            <person name="Sasakawa C."/>
            <person name="Ogasawara N."/>
            <person name="Yasunaga T."/>
            <person name="Kuhara S."/>
            <person name="Shiba T."/>
            <person name="Hattori M."/>
            <person name="Shinagawa H."/>
        </authorList>
    </citation>
    <scope>NUCLEOTIDE SEQUENCE [LARGE SCALE GENOMIC DNA]</scope>
    <source>
        <strain>O157:H7 / Sakai / RIMD 0509952 / EHEC</strain>
    </source>
</reference>
<organism>
    <name type="scientific">Escherichia coli O157:H7</name>
    <dbReference type="NCBI Taxonomy" id="83334"/>
    <lineage>
        <taxon>Bacteria</taxon>
        <taxon>Pseudomonadati</taxon>
        <taxon>Pseudomonadota</taxon>
        <taxon>Gammaproteobacteria</taxon>
        <taxon>Enterobacterales</taxon>
        <taxon>Enterobacteriaceae</taxon>
        <taxon>Escherichia</taxon>
    </lineage>
</organism>
<feature type="chain" id="PRO_0000147099" description="Multiphosphoryl transfer protein">
    <location>
        <begin position="1"/>
        <end position="831"/>
    </location>
</feature>
<feature type="domain" description="HPr" evidence="6">
    <location>
        <begin position="1"/>
        <end position="90"/>
    </location>
</feature>
<feature type="domain" description="PTS EIIA type-2" evidence="5">
    <location>
        <begin position="685"/>
        <end position="828"/>
    </location>
</feature>
<feature type="region of interest" description="PTS EI" evidence="4">
    <location>
        <begin position="119"/>
        <end position="650"/>
    </location>
</feature>
<feature type="active site" description="Pros-phosphohistidine intermediate; for HPr activity" evidence="6">
    <location>
        <position position="15"/>
    </location>
</feature>
<feature type="active site" description="Tele-phosphohistidine intermediate; for PTS EI activity" evidence="1 5">
    <location>
        <position position="298"/>
    </location>
</feature>
<feature type="active site" description="Proton donor; for EI activity" evidence="1">
    <location>
        <position position="611"/>
    </location>
</feature>
<feature type="active site" description="Tele-phosphohistidine intermediate; for PTS EIIA activity" evidence="5">
    <location>
        <position position="747"/>
    </location>
</feature>
<feature type="binding site" evidence="3">
    <location>
        <position position="405"/>
    </location>
    <ligand>
        <name>phosphoenolpyruvate</name>
        <dbReference type="ChEBI" id="CHEBI:58702"/>
    </ligand>
</feature>
<feature type="binding site" evidence="1">
    <location>
        <position position="441"/>
    </location>
    <ligand>
        <name>phosphoenolpyruvate</name>
        <dbReference type="ChEBI" id="CHEBI:58702"/>
    </ligand>
</feature>
<feature type="binding site" evidence="1">
    <location>
        <position position="540"/>
    </location>
    <ligand>
        <name>Mg(2+)</name>
        <dbReference type="ChEBI" id="CHEBI:18420"/>
    </ligand>
</feature>
<feature type="binding site" evidence="1">
    <location>
        <begin position="563"/>
        <end position="564"/>
    </location>
    <ligand>
        <name>phosphoenolpyruvate</name>
        <dbReference type="ChEBI" id="CHEBI:58702"/>
    </ligand>
</feature>
<feature type="binding site" evidence="1">
    <location>
        <position position="564"/>
    </location>
    <ligand>
        <name>Mg(2+)</name>
        <dbReference type="ChEBI" id="CHEBI:18420"/>
    </ligand>
</feature>
<feature type="binding site" evidence="3">
    <location>
        <position position="574"/>
    </location>
    <ligand>
        <name>phosphoenolpyruvate</name>
        <dbReference type="ChEBI" id="CHEBI:58702"/>
    </ligand>
</feature>
<feature type="modified residue" description="Phosphohistidine; by EI" evidence="7">
    <location>
        <position position="15"/>
    </location>
</feature>
<feature type="modified residue" description="Phosphohistidine; by autocatalysis" evidence="7">
    <location>
        <position position="298"/>
    </location>
</feature>
<feature type="modified residue" description="Phosphohistidine; by HPr" evidence="7">
    <location>
        <position position="747"/>
    </location>
</feature>